<sequence length="230" mass="24763">MAKHGKRYLEAAKKVDSTKFYSVDEAMKLAKETSYANFDATIEVAYNLNVDPKQADQQIRGALVLPNGTGKSKKVVVFAEGPQADQAKEAGADEVGSDDLVEKVQNGYLDFDVVIATPMMMAKVGRLGRILGPKGLMPNPKTGTVTMDVAKAVENQKAGQVEYRVDKQGLIHAPIGKASFDAEKLAQNFDALRDVILRARPASTKGQYVKSVAVSATFGPGIHLDPLNLD</sequence>
<comment type="function">
    <text evidence="1">Binds directly to 23S rRNA. The L1 stalk is quite mobile in the ribosome, and is involved in E site tRNA release.</text>
</comment>
<comment type="function">
    <text evidence="1">Protein L1 is also a translational repressor protein, it controls the translation of the L11 operon by binding to its mRNA.</text>
</comment>
<comment type="subunit">
    <text evidence="1">Part of the 50S ribosomal subunit.</text>
</comment>
<comment type="similarity">
    <text evidence="1">Belongs to the universal ribosomal protein uL1 family.</text>
</comment>
<name>RL1_LACJO</name>
<accession>Q74L13</accession>
<reference key="1">
    <citation type="journal article" date="2004" name="Proc. Natl. Acad. Sci. U.S.A.">
        <title>The genome sequence of the probiotic intestinal bacterium Lactobacillus johnsonii NCC 533.</title>
        <authorList>
            <person name="Pridmore R.D."/>
            <person name="Berger B."/>
            <person name="Desiere F."/>
            <person name="Vilanova D."/>
            <person name="Barretto C."/>
            <person name="Pittet A.-C."/>
            <person name="Zwahlen M.-C."/>
            <person name="Rouvet M."/>
            <person name="Altermann E."/>
            <person name="Barrangou R."/>
            <person name="Mollet B."/>
            <person name="Mercenier A."/>
            <person name="Klaenhammer T."/>
            <person name="Arigoni F."/>
            <person name="Schell M.A."/>
        </authorList>
    </citation>
    <scope>NUCLEOTIDE SEQUENCE [LARGE SCALE GENOMIC DNA]</scope>
    <source>
        <strain>CNCM I-1225 / La1 / NCC 533</strain>
    </source>
</reference>
<proteinExistence type="inferred from homology"/>
<protein>
    <recommendedName>
        <fullName evidence="1">Large ribosomal subunit protein uL1</fullName>
    </recommendedName>
    <alternativeName>
        <fullName evidence="2">50S ribosomal protein L1</fullName>
    </alternativeName>
</protein>
<feature type="chain" id="PRO_0000125670" description="Large ribosomal subunit protein uL1">
    <location>
        <begin position="1"/>
        <end position="230"/>
    </location>
</feature>
<organism>
    <name type="scientific">Lactobacillus johnsonii (strain CNCM I-12250 / La1 / NCC 533)</name>
    <dbReference type="NCBI Taxonomy" id="257314"/>
    <lineage>
        <taxon>Bacteria</taxon>
        <taxon>Bacillati</taxon>
        <taxon>Bacillota</taxon>
        <taxon>Bacilli</taxon>
        <taxon>Lactobacillales</taxon>
        <taxon>Lactobacillaceae</taxon>
        <taxon>Lactobacillus</taxon>
    </lineage>
</organism>
<evidence type="ECO:0000255" key="1">
    <source>
        <dbReference type="HAMAP-Rule" id="MF_01318"/>
    </source>
</evidence>
<evidence type="ECO:0000305" key="2"/>
<keyword id="KW-0678">Repressor</keyword>
<keyword id="KW-0687">Ribonucleoprotein</keyword>
<keyword id="KW-0689">Ribosomal protein</keyword>
<keyword id="KW-0694">RNA-binding</keyword>
<keyword id="KW-0699">rRNA-binding</keyword>
<keyword id="KW-0810">Translation regulation</keyword>
<keyword id="KW-0820">tRNA-binding</keyword>
<gene>
    <name evidence="1" type="primary">rplA</name>
    <name type="ordered locus">LJ_0411</name>
</gene>
<dbReference type="EMBL" id="AE017198">
    <property type="protein sequence ID" value="AAS08402.1"/>
    <property type="molecule type" value="Genomic_DNA"/>
</dbReference>
<dbReference type="RefSeq" id="WP_011161560.1">
    <property type="nucleotide sequence ID" value="NC_005362.1"/>
</dbReference>
<dbReference type="SMR" id="Q74L13"/>
<dbReference type="KEGG" id="ljo:LJ_0411"/>
<dbReference type="PATRIC" id="fig|257314.6.peg.436"/>
<dbReference type="eggNOG" id="COG0081">
    <property type="taxonomic scope" value="Bacteria"/>
</dbReference>
<dbReference type="HOGENOM" id="CLU_062853_0_0_9"/>
<dbReference type="Proteomes" id="UP000000581">
    <property type="component" value="Chromosome"/>
</dbReference>
<dbReference type="GO" id="GO:0015934">
    <property type="term" value="C:large ribosomal subunit"/>
    <property type="evidence" value="ECO:0007669"/>
    <property type="project" value="InterPro"/>
</dbReference>
<dbReference type="GO" id="GO:0019843">
    <property type="term" value="F:rRNA binding"/>
    <property type="evidence" value="ECO:0007669"/>
    <property type="project" value="UniProtKB-UniRule"/>
</dbReference>
<dbReference type="GO" id="GO:0003735">
    <property type="term" value="F:structural constituent of ribosome"/>
    <property type="evidence" value="ECO:0007669"/>
    <property type="project" value="InterPro"/>
</dbReference>
<dbReference type="GO" id="GO:0000049">
    <property type="term" value="F:tRNA binding"/>
    <property type="evidence" value="ECO:0007669"/>
    <property type="project" value="UniProtKB-KW"/>
</dbReference>
<dbReference type="GO" id="GO:0006417">
    <property type="term" value="P:regulation of translation"/>
    <property type="evidence" value="ECO:0007669"/>
    <property type="project" value="UniProtKB-KW"/>
</dbReference>
<dbReference type="GO" id="GO:0006412">
    <property type="term" value="P:translation"/>
    <property type="evidence" value="ECO:0007669"/>
    <property type="project" value="UniProtKB-UniRule"/>
</dbReference>
<dbReference type="CDD" id="cd00403">
    <property type="entry name" value="Ribosomal_L1"/>
    <property type="match status" value="1"/>
</dbReference>
<dbReference type="FunFam" id="3.40.50.790:FF:000001">
    <property type="entry name" value="50S ribosomal protein L1"/>
    <property type="match status" value="1"/>
</dbReference>
<dbReference type="Gene3D" id="3.30.190.20">
    <property type="match status" value="1"/>
</dbReference>
<dbReference type="Gene3D" id="3.40.50.790">
    <property type="match status" value="1"/>
</dbReference>
<dbReference type="HAMAP" id="MF_01318_B">
    <property type="entry name" value="Ribosomal_uL1_B"/>
    <property type="match status" value="1"/>
</dbReference>
<dbReference type="InterPro" id="IPR005878">
    <property type="entry name" value="Ribosom_uL1_bac-type"/>
</dbReference>
<dbReference type="InterPro" id="IPR002143">
    <property type="entry name" value="Ribosomal_uL1"/>
</dbReference>
<dbReference type="InterPro" id="IPR023674">
    <property type="entry name" value="Ribosomal_uL1-like"/>
</dbReference>
<dbReference type="InterPro" id="IPR028364">
    <property type="entry name" value="Ribosomal_uL1/biogenesis"/>
</dbReference>
<dbReference type="InterPro" id="IPR016095">
    <property type="entry name" value="Ribosomal_uL1_3-a/b-sand"/>
</dbReference>
<dbReference type="InterPro" id="IPR023673">
    <property type="entry name" value="Ribosomal_uL1_CS"/>
</dbReference>
<dbReference type="NCBIfam" id="TIGR01169">
    <property type="entry name" value="rplA_bact"/>
    <property type="match status" value="1"/>
</dbReference>
<dbReference type="PANTHER" id="PTHR36427">
    <property type="entry name" value="54S RIBOSOMAL PROTEIN L1, MITOCHONDRIAL"/>
    <property type="match status" value="1"/>
</dbReference>
<dbReference type="PANTHER" id="PTHR36427:SF3">
    <property type="entry name" value="LARGE RIBOSOMAL SUBUNIT PROTEIN UL1M"/>
    <property type="match status" value="1"/>
</dbReference>
<dbReference type="Pfam" id="PF00687">
    <property type="entry name" value="Ribosomal_L1"/>
    <property type="match status" value="1"/>
</dbReference>
<dbReference type="PIRSF" id="PIRSF002155">
    <property type="entry name" value="Ribosomal_L1"/>
    <property type="match status" value="1"/>
</dbReference>
<dbReference type="SUPFAM" id="SSF56808">
    <property type="entry name" value="Ribosomal protein L1"/>
    <property type="match status" value="1"/>
</dbReference>
<dbReference type="PROSITE" id="PS01199">
    <property type="entry name" value="RIBOSOMAL_L1"/>
    <property type="match status" value="1"/>
</dbReference>